<comment type="function">
    <text>Could be a component of the mitochondrial translation system with a role in promoting accuracy of translational initiation.</text>
</comment>
<comment type="subcellular location">
    <subcellularLocation>
        <location evidence="3">Mitochondrion</location>
    </subcellularLocation>
</comment>
<comment type="miscellaneous">
    <text evidence="2">Present with 1730 molecules/cell in log phase SD medium.</text>
</comment>
<comment type="similarity">
    <text evidence="3">Belongs to the PET127 family.</text>
</comment>
<proteinExistence type="evidence at protein level"/>
<dbReference type="EMBL" id="X58363">
    <property type="protein sequence ID" value="CAA41257.1"/>
    <property type="molecule type" value="Genomic_DNA"/>
</dbReference>
<dbReference type="EMBL" id="X87331">
    <property type="protein sequence ID" value="CAA60766.1"/>
    <property type="molecule type" value="Genomic_DNA"/>
</dbReference>
<dbReference type="EMBL" id="Z74925">
    <property type="protein sequence ID" value="CAA99207.1"/>
    <property type="molecule type" value="Genomic_DNA"/>
</dbReference>
<dbReference type="EMBL" id="BK006948">
    <property type="protein sequence ID" value="DAA10799.1"/>
    <property type="molecule type" value="Genomic_DNA"/>
</dbReference>
<dbReference type="PIR" id="S54623">
    <property type="entry name" value="S54623"/>
</dbReference>
<dbReference type="RefSeq" id="NP_014660.1">
    <property type="nucleotide sequence ID" value="NM_001183436.1"/>
</dbReference>
<dbReference type="SMR" id="P32606"/>
<dbReference type="BioGRID" id="34421">
    <property type="interactions" value="228"/>
</dbReference>
<dbReference type="DIP" id="DIP-895N"/>
<dbReference type="FunCoup" id="P32606">
    <property type="interactions" value="177"/>
</dbReference>
<dbReference type="IntAct" id="P32606">
    <property type="interactions" value="12"/>
</dbReference>
<dbReference type="MINT" id="P32606"/>
<dbReference type="STRING" id="4932.YOR017W"/>
<dbReference type="GlyGen" id="P32606">
    <property type="glycosylation" value="1 site, 1 O-linked glycan (1 site)"/>
</dbReference>
<dbReference type="iPTMnet" id="P32606"/>
<dbReference type="PaxDb" id="4932-YOR017W"/>
<dbReference type="PeptideAtlas" id="P32606"/>
<dbReference type="EnsemblFungi" id="YOR017W_mRNA">
    <property type="protein sequence ID" value="YOR017W"/>
    <property type="gene ID" value="YOR017W"/>
</dbReference>
<dbReference type="GeneID" id="854182"/>
<dbReference type="KEGG" id="sce:YOR017W"/>
<dbReference type="AGR" id="SGD:S000005543"/>
<dbReference type="SGD" id="S000005543">
    <property type="gene designation" value="PET127"/>
</dbReference>
<dbReference type="VEuPathDB" id="FungiDB:YOR017W"/>
<dbReference type="eggNOG" id="ENOG502QPU6">
    <property type="taxonomic scope" value="Eukaryota"/>
</dbReference>
<dbReference type="HOGENOM" id="CLU_003477_3_0_1"/>
<dbReference type="InParanoid" id="P32606"/>
<dbReference type="OMA" id="WEKCKIM"/>
<dbReference type="OrthoDB" id="10249045at2759"/>
<dbReference type="BioCyc" id="YEAST:G3O-33565-MONOMER"/>
<dbReference type="BioGRID-ORCS" id="854182">
    <property type="hits" value="1 hit in 10 CRISPR screens"/>
</dbReference>
<dbReference type="PRO" id="PR:P32606"/>
<dbReference type="Proteomes" id="UP000002311">
    <property type="component" value="Chromosome XV"/>
</dbReference>
<dbReference type="RNAct" id="P32606">
    <property type="molecule type" value="protein"/>
</dbReference>
<dbReference type="GO" id="GO:0005740">
    <property type="term" value="C:mitochondrial envelope"/>
    <property type="evidence" value="ECO:0000314"/>
    <property type="project" value="SGD"/>
</dbReference>
<dbReference type="GO" id="GO:0005739">
    <property type="term" value="C:mitochondrion"/>
    <property type="evidence" value="ECO:0007005"/>
    <property type="project" value="SGD"/>
</dbReference>
<dbReference type="GO" id="GO:0000964">
    <property type="term" value="P:mitochondrial RNA 5'-end processing"/>
    <property type="evidence" value="ECO:0000315"/>
    <property type="project" value="SGD"/>
</dbReference>
<dbReference type="GO" id="GO:0000959">
    <property type="term" value="P:mitochondrial RNA metabolic process"/>
    <property type="evidence" value="ECO:0007669"/>
    <property type="project" value="InterPro"/>
</dbReference>
<dbReference type="InterPro" id="IPR013943">
    <property type="entry name" value="Pet127"/>
</dbReference>
<dbReference type="PANTHER" id="PTHR31014">
    <property type="entry name" value="MITOCHONDRIAL TRANSLATION SYSTEM COMPONENT PET127-RELATED"/>
    <property type="match status" value="1"/>
</dbReference>
<dbReference type="PANTHER" id="PTHR31014:SF0">
    <property type="entry name" value="MITOCHONDRIAL TRANSLATION SYSTEM COMPONENT PET127-RELATED"/>
    <property type="match status" value="1"/>
</dbReference>
<dbReference type="Pfam" id="PF08634">
    <property type="entry name" value="Pet127"/>
    <property type="match status" value="1"/>
</dbReference>
<accession>P32606</accession>
<accession>D6W283</accession>
<keyword id="KW-0496">Mitochondrion</keyword>
<keyword id="KW-1185">Reference proteome</keyword>
<name>PT127_YEAST</name>
<sequence length="800" mass="93408">MGFYNCRFLSRRLSVEPCRIGSAAKSYQQRSIYHFGAALTNAPSGRETPDKLRSDLHSALEMVDEIYDTNSTVEDIGNKEKGGRQKYTEEMDKAINLLKTNIKKEYRHDKYLERTKVGTYPGRRTYPGRRTYPARRTYPASRTYSDSNSYTFRINVQKIRHALVRYNQDGVQKHNQKPPRIGHGLTRVLYQPLSLQKLRDNRSRMYNFDPAVENINPEYLEKKSEKDVNTDSSGEGQSKPIFITPHKDESLLKVAKEHRKKYISSSSSMTSVLSQLHYLLSNFRRLNIIDSSISKNFPQKNCNYSESAYFPSAVILRKKRNGICSIDSDRSLDREIVLSVLGHYLEDFLTEKSLKNSSKSENYHYSSIDEFIVRSQLDAYDPNLPGTGVFDLKTRAVSAIRYDLSHVESNNNQTGYEIDKVYGEFESLEREYFELIRSALLKYSLQARIGKMDGIFVAYHNISKMFGFQYLPLDELDYIIHSSYNSKFDSLLKEKNDITKGIYGEEDYILHYDRDDRKIACLVANREFKMSMNLFSNILKHVEQLLNSSNTKWEKCKIMLKTEVEEKRSKSGRFFNEPVLNIVALPLSPEYEDKSLLVKDTSNEQLTEELLNLRSYNENLLEEHLNSLVGFKVNVKHFYHHHPNTTHLPDFALKKNDILDTESRKYISDMMKRDWYKDIPSTQTPNFFHASDVSTWEVNSTFTDINDKQILRKLYFKYLDVKLNALKNQVITRQEPDMSKKDEIMNRIKSLQARNDHRDNGSNKRYSNFGPTRLQTKLRAYAKKGALRRKLLERSNKFHI</sequence>
<gene>
    <name type="primary">PET127</name>
    <name type="ordered locus">YOR017W</name>
    <name type="ORF">OR26.07</name>
</gene>
<feature type="chain" id="PRO_0000097082" description="Putative mitochondrial translation system component PET127">
    <location>
        <begin position="1"/>
        <end position="800"/>
    </location>
</feature>
<feature type="region of interest" description="Disordered" evidence="1">
    <location>
        <begin position="219"/>
        <end position="240"/>
    </location>
</feature>
<feature type="compositionally biased region" description="Basic and acidic residues" evidence="1">
    <location>
        <begin position="219"/>
        <end position="229"/>
    </location>
</feature>
<reference key="1">
    <citation type="journal article" date="1992" name="Mol. Gen. Genet.">
        <title>Suppression of carboxy-terminal truncations of the yeast mitochondrial mRNA-specific translational activator PET122 by mutations in two new genes, MRP17 and PET127.</title>
        <authorList>
            <person name="Haffter P.T."/>
            <person name="Fox T.D."/>
        </authorList>
    </citation>
    <scope>NUCLEOTIDE SEQUENCE [GENOMIC DNA] OF 91-800</scope>
</reference>
<reference key="2">
    <citation type="journal article" date="1997" name="Nature">
        <title>The nucleotide sequence of Saccharomyces cerevisiae chromosome XV.</title>
        <authorList>
            <person name="Dujon B."/>
            <person name="Albermann K."/>
            <person name="Aldea M."/>
            <person name="Alexandraki D."/>
            <person name="Ansorge W."/>
            <person name="Arino J."/>
            <person name="Benes V."/>
            <person name="Bohn C."/>
            <person name="Bolotin-Fukuhara M."/>
            <person name="Bordonne R."/>
            <person name="Boyer J."/>
            <person name="Camasses A."/>
            <person name="Casamayor A."/>
            <person name="Casas C."/>
            <person name="Cheret G."/>
            <person name="Cziepluch C."/>
            <person name="Daignan-Fornier B."/>
            <person name="Dang V.-D."/>
            <person name="de Haan M."/>
            <person name="Delius H."/>
            <person name="Durand P."/>
            <person name="Fairhead C."/>
            <person name="Feldmann H."/>
            <person name="Gaillon L."/>
            <person name="Galisson F."/>
            <person name="Gamo F.-J."/>
            <person name="Gancedo C."/>
            <person name="Goffeau A."/>
            <person name="Goulding S.E."/>
            <person name="Grivell L.A."/>
            <person name="Habbig B."/>
            <person name="Hand N.J."/>
            <person name="Hani J."/>
            <person name="Hattenhorst U."/>
            <person name="Hebling U."/>
            <person name="Hernando Y."/>
            <person name="Herrero E."/>
            <person name="Heumann K."/>
            <person name="Hiesel R."/>
            <person name="Hilger F."/>
            <person name="Hofmann B."/>
            <person name="Hollenberg C.P."/>
            <person name="Hughes B."/>
            <person name="Jauniaux J.-C."/>
            <person name="Kalogeropoulos A."/>
            <person name="Katsoulou C."/>
            <person name="Kordes E."/>
            <person name="Lafuente M.J."/>
            <person name="Landt O."/>
            <person name="Louis E.J."/>
            <person name="Maarse A.C."/>
            <person name="Madania A."/>
            <person name="Mannhaupt G."/>
            <person name="Marck C."/>
            <person name="Martin R.P."/>
            <person name="Mewes H.-W."/>
            <person name="Michaux G."/>
            <person name="Paces V."/>
            <person name="Parle-McDermott A.G."/>
            <person name="Pearson B.M."/>
            <person name="Perrin A."/>
            <person name="Pettersson B."/>
            <person name="Poch O."/>
            <person name="Pohl T.M."/>
            <person name="Poirey R."/>
            <person name="Portetelle D."/>
            <person name="Pujol A."/>
            <person name="Purnelle B."/>
            <person name="Ramezani Rad M."/>
            <person name="Rechmann S."/>
            <person name="Schwager C."/>
            <person name="Schweizer M."/>
            <person name="Sor F."/>
            <person name="Sterky F."/>
            <person name="Tarassov I.A."/>
            <person name="Teodoru C."/>
            <person name="Tettelin H."/>
            <person name="Thierry A."/>
            <person name="Tobiasch E."/>
            <person name="Tzermia M."/>
            <person name="Uhlen M."/>
            <person name="Unseld M."/>
            <person name="Valens M."/>
            <person name="Vandenbol M."/>
            <person name="Vetter I."/>
            <person name="Vlcek C."/>
            <person name="Voet M."/>
            <person name="Volckaert G."/>
            <person name="Voss H."/>
            <person name="Wambutt R."/>
            <person name="Wedler H."/>
            <person name="Wiemann S."/>
            <person name="Winsor B."/>
            <person name="Wolfe K.H."/>
            <person name="Zollner A."/>
            <person name="Zumstein E."/>
            <person name="Kleine K."/>
        </authorList>
    </citation>
    <scope>NUCLEOTIDE SEQUENCE [LARGE SCALE GENOMIC DNA]</scope>
    <source>
        <strain>ATCC 204508 / S288c</strain>
    </source>
</reference>
<reference key="3">
    <citation type="journal article" date="2014" name="G3 (Bethesda)">
        <title>The reference genome sequence of Saccharomyces cerevisiae: Then and now.</title>
        <authorList>
            <person name="Engel S.R."/>
            <person name="Dietrich F.S."/>
            <person name="Fisk D.G."/>
            <person name="Binkley G."/>
            <person name="Balakrishnan R."/>
            <person name="Costanzo M.C."/>
            <person name="Dwight S.S."/>
            <person name="Hitz B.C."/>
            <person name="Karra K."/>
            <person name="Nash R.S."/>
            <person name="Weng S."/>
            <person name="Wong E.D."/>
            <person name="Lloyd P."/>
            <person name="Skrzypek M.S."/>
            <person name="Miyasato S.R."/>
            <person name="Simison M."/>
            <person name="Cherry J.M."/>
        </authorList>
    </citation>
    <scope>GENOME REANNOTATION</scope>
    <source>
        <strain>ATCC 204508 / S288c</strain>
    </source>
</reference>
<reference key="4">
    <citation type="journal article" date="2003" name="Nature">
        <title>Global analysis of protein expression in yeast.</title>
        <authorList>
            <person name="Ghaemmaghami S."/>
            <person name="Huh W.-K."/>
            <person name="Bower K."/>
            <person name="Howson R.W."/>
            <person name="Belle A."/>
            <person name="Dephoure N."/>
            <person name="O'Shea E.K."/>
            <person name="Weissman J.S."/>
        </authorList>
    </citation>
    <scope>LEVEL OF PROTEIN EXPRESSION [LARGE SCALE ANALYSIS]</scope>
</reference>
<evidence type="ECO:0000256" key="1">
    <source>
        <dbReference type="SAM" id="MobiDB-lite"/>
    </source>
</evidence>
<evidence type="ECO:0000269" key="2">
    <source>
    </source>
</evidence>
<evidence type="ECO:0000305" key="3"/>
<protein>
    <recommendedName>
        <fullName>Putative mitochondrial translation system component PET127</fullName>
    </recommendedName>
</protein>
<organism>
    <name type="scientific">Saccharomyces cerevisiae (strain ATCC 204508 / S288c)</name>
    <name type="common">Baker's yeast</name>
    <dbReference type="NCBI Taxonomy" id="559292"/>
    <lineage>
        <taxon>Eukaryota</taxon>
        <taxon>Fungi</taxon>
        <taxon>Dikarya</taxon>
        <taxon>Ascomycota</taxon>
        <taxon>Saccharomycotina</taxon>
        <taxon>Saccharomycetes</taxon>
        <taxon>Saccharomycetales</taxon>
        <taxon>Saccharomycetaceae</taxon>
        <taxon>Saccharomyces</taxon>
    </lineage>
</organism>